<accession>A8MJN5</accession>
<evidence type="ECO:0000255" key="1">
    <source>
        <dbReference type="HAMAP-Rule" id="MF_01382"/>
    </source>
</evidence>
<evidence type="ECO:0000256" key="2">
    <source>
        <dbReference type="SAM" id="MobiDB-lite"/>
    </source>
</evidence>
<keyword id="KW-0067">ATP-binding</keyword>
<keyword id="KW-1003">Cell membrane</keyword>
<keyword id="KW-0963">Cytoplasm</keyword>
<keyword id="KW-0472">Membrane</keyword>
<keyword id="KW-0479">Metal-binding</keyword>
<keyword id="KW-0547">Nucleotide-binding</keyword>
<keyword id="KW-0653">Protein transport</keyword>
<keyword id="KW-1185">Reference proteome</keyword>
<keyword id="KW-1278">Translocase</keyword>
<keyword id="KW-0811">Translocation</keyword>
<keyword id="KW-0813">Transport</keyword>
<keyword id="KW-0862">Zinc</keyword>
<comment type="function">
    <text evidence="1">Part of the Sec protein translocase complex. Interacts with the SecYEG preprotein conducting channel. Has a central role in coupling the hydrolysis of ATP to the transfer of proteins into and across the cell membrane, serving as an ATP-driven molecular motor driving the stepwise translocation of polypeptide chains across the membrane.</text>
</comment>
<comment type="catalytic activity">
    <reaction evidence="1">
        <text>ATP + H2O + cellular proteinSide 1 = ADP + phosphate + cellular proteinSide 2.</text>
        <dbReference type="EC" id="7.4.2.8"/>
    </reaction>
</comment>
<comment type="cofactor">
    <cofactor evidence="1">
        <name>Zn(2+)</name>
        <dbReference type="ChEBI" id="CHEBI:29105"/>
    </cofactor>
    <text evidence="1">May bind 1 zinc ion per subunit.</text>
</comment>
<comment type="subunit">
    <text evidence="1">Monomer and homodimer. Part of the essential Sec protein translocation apparatus which comprises SecA, SecYEG and auxiliary proteins SecDF. Other proteins may also be involved.</text>
</comment>
<comment type="subcellular location">
    <subcellularLocation>
        <location evidence="1">Cell membrane</location>
        <topology evidence="1">Peripheral membrane protein</topology>
        <orientation evidence="1">Cytoplasmic side</orientation>
    </subcellularLocation>
    <subcellularLocation>
        <location evidence="1">Cytoplasm</location>
    </subcellularLocation>
    <text evidence="1">Distribution is 50-50.</text>
</comment>
<comment type="similarity">
    <text evidence="1">Belongs to the SecA family.</text>
</comment>
<sequence>MRKLFEKVFGTYSEREIKKLDKTVDQIEALEAAYSKLTDAELKDKTRQFKERLAKGETLDDILPEAFATIREGAWRTLGMKHYRVQLYGGMVLHQGRIAEMRTGEGKTLMATLPVYLNALSGKGVHVVTVNDYLAKRDQEWMSKVYNFLGLTVGVIVHGITNEDRRKAYHCDITYGTNNEFGFDYLRDNMVIHLHEMVQRPLNYAIVDEVDSILIDEARTPLIISGQGDKSTKMYFIVDQFVKTLKKEVDFEVDEKANSVTLTEEGVERAEKYFAVDNLSDMENTELAHHINQALKANNLMKLDKDYVVKDGEIIIVDDFTGRLMFGRRYSEGLHQAIEAKEGLEVQRESKTLATITFQNYFRMYDKLSGMTGTAKTEEDEFISIYNMDVVEIPTNKPVVRIDEPDSVYKSEKGKVLSIIKDIEEKHKKGQPVLVGTISIEKSEELAAALKKKGIPHEVLNAKQHEREAEIIAQAGRKGIVTIATNMAGRGTDILLGGNPEFLAKREMKRMGYGDEIISMVTSHAETDNEELISARGKYEELYKRFKAETDREHEEVKAVGGLHIIGTERHESRRIDNQLRGRAGRQGDPGSSRFYISLEDDLMRLFGGERMLGIVDKMGLAEDEAIEHRLLTNSIENAQKKVEGRNFGIRKHVLQYDDVMNKQREVIYGERKKVLEGENMRDHIFSLMANIVDESIPMYTSEATSTPEIDTEGLRNHLSKIFLKADFGFINGQNKDVESLKSQIVAAAEKAYAVKEEEIGSERMREIERVILLQVIDTKWMDHIDAMDQLRQGIGLRAIGQVDPVRAYQLEGYDMFQEMINSIQEDTVRFLFSIEKEAVVERKQVAKPIEASHGDGDAKKAPVVKKEESGRNDLCPCGSGKKYKKCCGK</sequence>
<gene>
    <name evidence="1" type="primary">secA</name>
    <name type="ordered locus">Clos_2485</name>
</gene>
<proteinExistence type="inferred from homology"/>
<protein>
    <recommendedName>
        <fullName evidence="1">Protein translocase subunit SecA</fullName>
        <ecNumber evidence="1">7.4.2.8</ecNumber>
    </recommendedName>
</protein>
<reference key="1">
    <citation type="submission" date="2007-10" db="EMBL/GenBank/DDBJ databases">
        <title>Complete genome of Alkaliphilus oremlandii OhILAs.</title>
        <authorList>
            <person name="Copeland A."/>
            <person name="Lucas S."/>
            <person name="Lapidus A."/>
            <person name="Barry K."/>
            <person name="Detter J.C."/>
            <person name="Glavina del Rio T."/>
            <person name="Hammon N."/>
            <person name="Israni S."/>
            <person name="Dalin E."/>
            <person name="Tice H."/>
            <person name="Pitluck S."/>
            <person name="Chain P."/>
            <person name="Malfatti S."/>
            <person name="Shin M."/>
            <person name="Vergez L."/>
            <person name="Schmutz J."/>
            <person name="Larimer F."/>
            <person name="Land M."/>
            <person name="Hauser L."/>
            <person name="Kyrpides N."/>
            <person name="Mikhailova N."/>
            <person name="Stolz J.F."/>
            <person name="Dawson A."/>
            <person name="Fisher E."/>
            <person name="Crable B."/>
            <person name="Perera E."/>
            <person name="Lisak J."/>
            <person name="Ranganathan M."/>
            <person name="Basu P."/>
            <person name="Richardson P."/>
        </authorList>
    </citation>
    <scope>NUCLEOTIDE SEQUENCE [LARGE SCALE GENOMIC DNA]</scope>
    <source>
        <strain>OhILAs</strain>
    </source>
</reference>
<organism>
    <name type="scientific">Alkaliphilus oremlandii (strain OhILAs)</name>
    <name type="common">Clostridium oremlandii (strain OhILAs)</name>
    <dbReference type="NCBI Taxonomy" id="350688"/>
    <lineage>
        <taxon>Bacteria</taxon>
        <taxon>Bacillati</taxon>
        <taxon>Bacillota</taxon>
        <taxon>Clostridia</taxon>
        <taxon>Peptostreptococcales</taxon>
        <taxon>Natronincolaceae</taxon>
        <taxon>Alkaliphilus</taxon>
    </lineage>
</organism>
<feature type="chain" id="PRO_0000320721" description="Protein translocase subunit SecA">
    <location>
        <begin position="1"/>
        <end position="890"/>
    </location>
</feature>
<feature type="region of interest" description="Disordered" evidence="2">
    <location>
        <begin position="851"/>
        <end position="873"/>
    </location>
</feature>
<feature type="compositionally biased region" description="Basic and acidic residues" evidence="2">
    <location>
        <begin position="851"/>
        <end position="872"/>
    </location>
</feature>
<feature type="binding site" evidence="1">
    <location>
        <position position="86"/>
    </location>
    <ligand>
        <name>ATP</name>
        <dbReference type="ChEBI" id="CHEBI:30616"/>
    </ligand>
</feature>
<feature type="binding site" evidence="1">
    <location>
        <begin position="104"/>
        <end position="108"/>
    </location>
    <ligand>
        <name>ATP</name>
        <dbReference type="ChEBI" id="CHEBI:30616"/>
    </ligand>
</feature>
<feature type="binding site" evidence="1">
    <location>
        <position position="493"/>
    </location>
    <ligand>
        <name>ATP</name>
        <dbReference type="ChEBI" id="CHEBI:30616"/>
    </ligand>
</feature>
<feature type="binding site" evidence="1">
    <location>
        <position position="876"/>
    </location>
    <ligand>
        <name>Zn(2+)</name>
        <dbReference type="ChEBI" id="CHEBI:29105"/>
    </ligand>
</feature>
<feature type="binding site" evidence="1">
    <location>
        <position position="878"/>
    </location>
    <ligand>
        <name>Zn(2+)</name>
        <dbReference type="ChEBI" id="CHEBI:29105"/>
    </ligand>
</feature>
<feature type="binding site" evidence="1">
    <location>
        <position position="887"/>
    </location>
    <ligand>
        <name>Zn(2+)</name>
        <dbReference type="ChEBI" id="CHEBI:29105"/>
    </ligand>
</feature>
<feature type="binding site" evidence="1">
    <location>
        <position position="888"/>
    </location>
    <ligand>
        <name>Zn(2+)</name>
        <dbReference type="ChEBI" id="CHEBI:29105"/>
    </ligand>
</feature>
<dbReference type="EC" id="7.4.2.8" evidence="1"/>
<dbReference type="EMBL" id="CP000853">
    <property type="protein sequence ID" value="ABW20017.1"/>
    <property type="molecule type" value="Genomic_DNA"/>
</dbReference>
<dbReference type="RefSeq" id="WP_012160324.1">
    <property type="nucleotide sequence ID" value="NC_009922.1"/>
</dbReference>
<dbReference type="SMR" id="A8MJN5"/>
<dbReference type="STRING" id="350688.Clos_2485"/>
<dbReference type="KEGG" id="aoe:Clos_2485"/>
<dbReference type="eggNOG" id="COG0653">
    <property type="taxonomic scope" value="Bacteria"/>
</dbReference>
<dbReference type="HOGENOM" id="CLU_005314_3_0_9"/>
<dbReference type="OrthoDB" id="9805579at2"/>
<dbReference type="Proteomes" id="UP000000269">
    <property type="component" value="Chromosome"/>
</dbReference>
<dbReference type="GO" id="GO:0031522">
    <property type="term" value="C:cell envelope Sec protein transport complex"/>
    <property type="evidence" value="ECO:0007669"/>
    <property type="project" value="TreeGrafter"/>
</dbReference>
<dbReference type="GO" id="GO:0005829">
    <property type="term" value="C:cytosol"/>
    <property type="evidence" value="ECO:0007669"/>
    <property type="project" value="TreeGrafter"/>
</dbReference>
<dbReference type="GO" id="GO:0005886">
    <property type="term" value="C:plasma membrane"/>
    <property type="evidence" value="ECO:0007669"/>
    <property type="project" value="UniProtKB-SubCell"/>
</dbReference>
<dbReference type="GO" id="GO:0005524">
    <property type="term" value="F:ATP binding"/>
    <property type="evidence" value="ECO:0007669"/>
    <property type="project" value="UniProtKB-UniRule"/>
</dbReference>
<dbReference type="GO" id="GO:0046872">
    <property type="term" value="F:metal ion binding"/>
    <property type="evidence" value="ECO:0007669"/>
    <property type="project" value="UniProtKB-KW"/>
</dbReference>
<dbReference type="GO" id="GO:0008564">
    <property type="term" value="F:protein-exporting ATPase activity"/>
    <property type="evidence" value="ECO:0007669"/>
    <property type="project" value="UniProtKB-EC"/>
</dbReference>
<dbReference type="GO" id="GO:0065002">
    <property type="term" value="P:intracellular protein transmembrane transport"/>
    <property type="evidence" value="ECO:0007669"/>
    <property type="project" value="UniProtKB-UniRule"/>
</dbReference>
<dbReference type="GO" id="GO:0017038">
    <property type="term" value="P:protein import"/>
    <property type="evidence" value="ECO:0007669"/>
    <property type="project" value="InterPro"/>
</dbReference>
<dbReference type="GO" id="GO:0006605">
    <property type="term" value="P:protein targeting"/>
    <property type="evidence" value="ECO:0007669"/>
    <property type="project" value="UniProtKB-UniRule"/>
</dbReference>
<dbReference type="GO" id="GO:0043952">
    <property type="term" value="P:protein transport by the Sec complex"/>
    <property type="evidence" value="ECO:0007669"/>
    <property type="project" value="TreeGrafter"/>
</dbReference>
<dbReference type="CDD" id="cd17928">
    <property type="entry name" value="DEXDc_SecA"/>
    <property type="match status" value="1"/>
</dbReference>
<dbReference type="CDD" id="cd18803">
    <property type="entry name" value="SF2_C_secA"/>
    <property type="match status" value="1"/>
</dbReference>
<dbReference type="FunFam" id="3.40.50.300:FF:000113">
    <property type="entry name" value="Preprotein translocase subunit SecA"/>
    <property type="match status" value="1"/>
</dbReference>
<dbReference type="FunFam" id="3.90.1440.10:FF:000001">
    <property type="entry name" value="Preprotein translocase subunit SecA"/>
    <property type="match status" value="1"/>
</dbReference>
<dbReference type="FunFam" id="3.40.50.300:FF:000334">
    <property type="entry name" value="Protein translocase subunit SecA"/>
    <property type="match status" value="1"/>
</dbReference>
<dbReference type="Gene3D" id="1.10.3060.10">
    <property type="entry name" value="Helical scaffold and wing domains of SecA"/>
    <property type="match status" value="1"/>
</dbReference>
<dbReference type="Gene3D" id="3.40.50.300">
    <property type="entry name" value="P-loop containing nucleotide triphosphate hydrolases"/>
    <property type="match status" value="2"/>
</dbReference>
<dbReference type="Gene3D" id="3.90.1440.10">
    <property type="entry name" value="SecA, preprotein cross-linking domain"/>
    <property type="match status" value="1"/>
</dbReference>
<dbReference type="HAMAP" id="MF_01382">
    <property type="entry name" value="SecA"/>
    <property type="match status" value="1"/>
</dbReference>
<dbReference type="InterPro" id="IPR014001">
    <property type="entry name" value="Helicase_ATP-bd"/>
</dbReference>
<dbReference type="InterPro" id="IPR001650">
    <property type="entry name" value="Helicase_C-like"/>
</dbReference>
<dbReference type="InterPro" id="IPR027417">
    <property type="entry name" value="P-loop_NTPase"/>
</dbReference>
<dbReference type="InterPro" id="IPR004027">
    <property type="entry name" value="SEC_C_motif"/>
</dbReference>
<dbReference type="InterPro" id="IPR000185">
    <property type="entry name" value="SecA"/>
</dbReference>
<dbReference type="InterPro" id="IPR020937">
    <property type="entry name" value="SecA_CS"/>
</dbReference>
<dbReference type="InterPro" id="IPR011115">
    <property type="entry name" value="SecA_DEAD"/>
</dbReference>
<dbReference type="InterPro" id="IPR014018">
    <property type="entry name" value="SecA_motor_DEAD"/>
</dbReference>
<dbReference type="InterPro" id="IPR011130">
    <property type="entry name" value="SecA_preprotein_X-link_dom"/>
</dbReference>
<dbReference type="InterPro" id="IPR044722">
    <property type="entry name" value="SecA_SF2_C"/>
</dbReference>
<dbReference type="InterPro" id="IPR011116">
    <property type="entry name" value="SecA_Wing/Scaffold"/>
</dbReference>
<dbReference type="InterPro" id="IPR036266">
    <property type="entry name" value="SecA_Wing/Scaffold_sf"/>
</dbReference>
<dbReference type="InterPro" id="IPR036670">
    <property type="entry name" value="SecA_X-link_sf"/>
</dbReference>
<dbReference type="NCBIfam" id="NF009538">
    <property type="entry name" value="PRK12904.1"/>
    <property type="match status" value="1"/>
</dbReference>
<dbReference type="NCBIfam" id="TIGR00963">
    <property type="entry name" value="secA"/>
    <property type="match status" value="1"/>
</dbReference>
<dbReference type="PANTHER" id="PTHR30612:SF0">
    <property type="entry name" value="CHLOROPLAST PROTEIN-TRANSPORTING ATPASE"/>
    <property type="match status" value="1"/>
</dbReference>
<dbReference type="PANTHER" id="PTHR30612">
    <property type="entry name" value="SECA INNER MEMBRANE COMPONENT OF SEC PROTEIN SECRETION SYSTEM"/>
    <property type="match status" value="1"/>
</dbReference>
<dbReference type="Pfam" id="PF21090">
    <property type="entry name" value="P-loop_SecA"/>
    <property type="match status" value="1"/>
</dbReference>
<dbReference type="Pfam" id="PF02810">
    <property type="entry name" value="SEC-C"/>
    <property type="match status" value="1"/>
</dbReference>
<dbReference type="Pfam" id="PF07517">
    <property type="entry name" value="SecA_DEAD"/>
    <property type="match status" value="1"/>
</dbReference>
<dbReference type="Pfam" id="PF01043">
    <property type="entry name" value="SecA_PP_bind"/>
    <property type="match status" value="1"/>
</dbReference>
<dbReference type="Pfam" id="PF07516">
    <property type="entry name" value="SecA_SW"/>
    <property type="match status" value="1"/>
</dbReference>
<dbReference type="PRINTS" id="PR00906">
    <property type="entry name" value="SECA"/>
</dbReference>
<dbReference type="SMART" id="SM00957">
    <property type="entry name" value="SecA_DEAD"/>
    <property type="match status" value="1"/>
</dbReference>
<dbReference type="SMART" id="SM00958">
    <property type="entry name" value="SecA_PP_bind"/>
    <property type="match status" value="1"/>
</dbReference>
<dbReference type="SUPFAM" id="SSF81886">
    <property type="entry name" value="Helical scaffold and wing domains of SecA"/>
    <property type="match status" value="1"/>
</dbReference>
<dbReference type="SUPFAM" id="SSF52540">
    <property type="entry name" value="P-loop containing nucleoside triphosphate hydrolases"/>
    <property type="match status" value="2"/>
</dbReference>
<dbReference type="SUPFAM" id="SSF81767">
    <property type="entry name" value="Pre-protein crosslinking domain of SecA"/>
    <property type="match status" value="1"/>
</dbReference>
<dbReference type="PROSITE" id="PS01312">
    <property type="entry name" value="SECA"/>
    <property type="match status" value="1"/>
</dbReference>
<dbReference type="PROSITE" id="PS51196">
    <property type="entry name" value="SECA_MOTOR_DEAD"/>
    <property type="match status" value="1"/>
</dbReference>
<name>SECA_ALKOO</name>